<name>RS3_AERPE</name>
<sequence length="246" mass="27749">MPTKVVKHFLNQGLLRTKIDEWLAQNFYEAGYSRVKVVQTSLGTNITIWAERPALIIGRRGATIRRLQEVFQTVFGLPNPRIRVEQPENPMLDARVQAFRIARSIERGIHFRRVAFAAINRIMSNGALGVEITISGKLTSERARFEKFKAGKVYKSGHKVDELVDRASAYARLPKGVIGVDVIIVKPGKPGDHVRIKSEEEVKDVVDAIRSEIESLGLQEETASTLREHMEAARPGEEHEEDREES</sequence>
<organism>
    <name type="scientific">Aeropyrum pernix (strain ATCC 700893 / DSM 11879 / JCM 9820 / NBRC 100138 / K1)</name>
    <dbReference type="NCBI Taxonomy" id="272557"/>
    <lineage>
        <taxon>Archaea</taxon>
        <taxon>Thermoproteota</taxon>
        <taxon>Thermoprotei</taxon>
        <taxon>Desulfurococcales</taxon>
        <taxon>Desulfurococcaceae</taxon>
        <taxon>Aeropyrum</taxon>
    </lineage>
</organism>
<feature type="chain" id="PRO_0000130245" description="Small ribosomal subunit protein uS3">
    <location>
        <begin position="1"/>
        <end position="246"/>
    </location>
</feature>
<feature type="domain" description="KH type-2" evidence="1">
    <location>
        <begin position="19"/>
        <end position="98"/>
    </location>
</feature>
<feature type="region of interest" description="Disordered" evidence="2">
    <location>
        <begin position="218"/>
        <end position="246"/>
    </location>
</feature>
<feature type="compositionally biased region" description="Basic and acidic residues" evidence="2">
    <location>
        <begin position="226"/>
        <end position="237"/>
    </location>
</feature>
<keyword id="KW-1185">Reference proteome</keyword>
<keyword id="KW-0687">Ribonucleoprotein</keyword>
<keyword id="KW-0689">Ribosomal protein</keyword>
<keyword id="KW-0694">RNA-binding</keyword>
<keyword id="KW-0699">rRNA-binding</keyword>
<accession>Q9YF78</accession>
<comment type="function">
    <text evidence="1">Binds the lower part of the 30S subunit head.</text>
</comment>
<comment type="subunit">
    <text evidence="1">Part of the 30S ribosomal subunit.</text>
</comment>
<comment type="similarity">
    <text evidence="1">Belongs to the universal ribosomal protein uS3 family.</text>
</comment>
<reference key="1">
    <citation type="journal article" date="1999" name="DNA Res.">
        <title>Complete genome sequence of an aerobic hyper-thermophilic crenarchaeon, Aeropyrum pernix K1.</title>
        <authorList>
            <person name="Kawarabayasi Y."/>
            <person name="Hino Y."/>
            <person name="Horikawa H."/>
            <person name="Yamazaki S."/>
            <person name="Haikawa Y."/>
            <person name="Jin-no K."/>
            <person name="Takahashi M."/>
            <person name="Sekine M."/>
            <person name="Baba S."/>
            <person name="Ankai A."/>
            <person name="Kosugi H."/>
            <person name="Hosoyama A."/>
            <person name="Fukui S."/>
            <person name="Nagai Y."/>
            <person name="Nishijima K."/>
            <person name="Nakazawa H."/>
            <person name="Takamiya M."/>
            <person name="Masuda S."/>
            <person name="Funahashi T."/>
            <person name="Tanaka T."/>
            <person name="Kudoh Y."/>
            <person name="Yamazaki J."/>
            <person name="Kushida N."/>
            <person name="Oguchi A."/>
            <person name="Aoki K."/>
            <person name="Kubota K."/>
            <person name="Nakamura Y."/>
            <person name="Nomura N."/>
            <person name="Sako Y."/>
            <person name="Kikuchi H."/>
        </authorList>
    </citation>
    <scope>NUCLEOTIDE SEQUENCE [LARGE SCALE GENOMIC DNA]</scope>
    <source>
        <strain>ATCC 700893 / DSM 11879 / JCM 9820 / NBRC 100138 / K1</strain>
    </source>
</reference>
<protein>
    <recommendedName>
        <fullName evidence="1">Small ribosomal subunit protein uS3</fullName>
    </recommendedName>
    <alternativeName>
        <fullName evidence="3">30S ribosomal protein S3</fullName>
    </alternativeName>
</protein>
<proteinExistence type="inferred from homology"/>
<dbReference type="EMBL" id="BA000002">
    <property type="protein sequence ID" value="BAA79318.1"/>
    <property type="molecule type" value="Genomic_DNA"/>
</dbReference>
<dbReference type="PIR" id="B72728">
    <property type="entry name" value="B72728"/>
</dbReference>
<dbReference type="RefSeq" id="WP_010865694.1">
    <property type="nucleotide sequence ID" value="NC_000854.2"/>
</dbReference>
<dbReference type="SMR" id="Q9YF78"/>
<dbReference type="STRING" id="272557.APE_0363"/>
<dbReference type="EnsemblBacteria" id="BAA79318">
    <property type="protein sequence ID" value="BAA79318"/>
    <property type="gene ID" value="APE_0363"/>
</dbReference>
<dbReference type="GeneID" id="1444576"/>
<dbReference type="KEGG" id="ape:APE_0363"/>
<dbReference type="PATRIC" id="fig|272557.25.peg.280"/>
<dbReference type="eggNOG" id="arCOG04097">
    <property type="taxonomic scope" value="Archaea"/>
</dbReference>
<dbReference type="Proteomes" id="UP000002518">
    <property type="component" value="Chromosome"/>
</dbReference>
<dbReference type="GO" id="GO:0022627">
    <property type="term" value="C:cytosolic small ribosomal subunit"/>
    <property type="evidence" value="ECO:0007669"/>
    <property type="project" value="TreeGrafter"/>
</dbReference>
<dbReference type="GO" id="GO:0019843">
    <property type="term" value="F:rRNA binding"/>
    <property type="evidence" value="ECO:0007669"/>
    <property type="project" value="UniProtKB-UniRule"/>
</dbReference>
<dbReference type="GO" id="GO:0003735">
    <property type="term" value="F:structural constituent of ribosome"/>
    <property type="evidence" value="ECO:0007669"/>
    <property type="project" value="InterPro"/>
</dbReference>
<dbReference type="GO" id="GO:0006412">
    <property type="term" value="P:translation"/>
    <property type="evidence" value="ECO:0007669"/>
    <property type="project" value="UniProtKB-UniRule"/>
</dbReference>
<dbReference type="CDD" id="cd02411">
    <property type="entry name" value="KH-II_30S_S3_arch"/>
    <property type="match status" value="1"/>
</dbReference>
<dbReference type="Gene3D" id="3.30.300.20">
    <property type="match status" value="1"/>
</dbReference>
<dbReference type="Gene3D" id="3.30.1140.32">
    <property type="entry name" value="Ribosomal protein S3, C-terminal domain"/>
    <property type="match status" value="1"/>
</dbReference>
<dbReference type="HAMAP" id="MF_01309_A">
    <property type="entry name" value="Ribosomal_uS3_A"/>
    <property type="match status" value="1"/>
</dbReference>
<dbReference type="InterPro" id="IPR004087">
    <property type="entry name" value="KH_dom"/>
</dbReference>
<dbReference type="InterPro" id="IPR015946">
    <property type="entry name" value="KH_dom-like_a/b"/>
</dbReference>
<dbReference type="InterPro" id="IPR004044">
    <property type="entry name" value="KH_dom_type_2"/>
</dbReference>
<dbReference type="InterPro" id="IPR009019">
    <property type="entry name" value="KH_sf_prok-type"/>
</dbReference>
<dbReference type="InterPro" id="IPR036419">
    <property type="entry name" value="Ribosomal_S3_C_sf"/>
</dbReference>
<dbReference type="InterPro" id="IPR027488">
    <property type="entry name" value="Ribosomal_uS3_arc"/>
</dbReference>
<dbReference type="InterPro" id="IPR001351">
    <property type="entry name" value="Ribosomal_uS3_C"/>
</dbReference>
<dbReference type="InterPro" id="IPR018280">
    <property type="entry name" value="Ribosomal_uS3_CS"/>
</dbReference>
<dbReference type="InterPro" id="IPR005703">
    <property type="entry name" value="Ribosomal_uS3_euk/arc"/>
</dbReference>
<dbReference type="NCBIfam" id="NF003219">
    <property type="entry name" value="PRK04191.1"/>
    <property type="match status" value="1"/>
</dbReference>
<dbReference type="NCBIfam" id="TIGR01008">
    <property type="entry name" value="uS3_euk_arch"/>
    <property type="match status" value="1"/>
</dbReference>
<dbReference type="PANTHER" id="PTHR11760">
    <property type="entry name" value="30S/40S RIBOSOMAL PROTEIN S3"/>
    <property type="match status" value="1"/>
</dbReference>
<dbReference type="PANTHER" id="PTHR11760:SF32">
    <property type="entry name" value="SMALL RIBOSOMAL SUBUNIT PROTEIN US3"/>
    <property type="match status" value="1"/>
</dbReference>
<dbReference type="Pfam" id="PF07650">
    <property type="entry name" value="KH_2"/>
    <property type="match status" value="1"/>
</dbReference>
<dbReference type="Pfam" id="PF00189">
    <property type="entry name" value="Ribosomal_S3_C"/>
    <property type="match status" value="1"/>
</dbReference>
<dbReference type="SMART" id="SM00322">
    <property type="entry name" value="KH"/>
    <property type="match status" value="1"/>
</dbReference>
<dbReference type="SUPFAM" id="SSF54814">
    <property type="entry name" value="Prokaryotic type KH domain (KH-domain type II)"/>
    <property type="match status" value="1"/>
</dbReference>
<dbReference type="SUPFAM" id="SSF54821">
    <property type="entry name" value="Ribosomal protein S3 C-terminal domain"/>
    <property type="match status" value="1"/>
</dbReference>
<dbReference type="PROSITE" id="PS50823">
    <property type="entry name" value="KH_TYPE_2"/>
    <property type="match status" value="1"/>
</dbReference>
<dbReference type="PROSITE" id="PS00548">
    <property type="entry name" value="RIBOSOMAL_S3"/>
    <property type="match status" value="1"/>
</dbReference>
<evidence type="ECO:0000255" key="1">
    <source>
        <dbReference type="HAMAP-Rule" id="MF_01309"/>
    </source>
</evidence>
<evidence type="ECO:0000256" key="2">
    <source>
        <dbReference type="SAM" id="MobiDB-lite"/>
    </source>
</evidence>
<evidence type="ECO:0000305" key="3"/>
<gene>
    <name evidence="1" type="primary">rps3</name>
    <name type="ordered locus">APE_0363</name>
</gene>